<accession>Q44856</accession>
<reference key="1">
    <citation type="journal article" date="1995" name="J. Bacteriol.">
        <title>Cloning and characterization of the gene for a protein thiol-disulfide oxidoreductase in Bacillus brevis.</title>
        <authorList>
            <person name="Ishihara T."/>
            <person name="Tomita H."/>
            <person name="Hasegawa Y."/>
            <person name="Tsukagoshi N."/>
            <person name="Yamagata H."/>
            <person name="Udaka S."/>
        </authorList>
    </citation>
    <scope>NUCLEOTIDE SEQUENCE [GENOMIC DNA]</scope>
    <scope>PROTEIN SEQUENCE OF 28-38</scope>
    <scope>CHARACTERIZATION</scope>
    <source>
        <strain>HPD31</strain>
    </source>
</reference>
<feature type="signal peptide" evidence="2">
    <location>
        <begin position="1"/>
        <end position="27"/>
    </location>
</feature>
<feature type="chain" id="PRO_0000034284" description="Disulfide bond formation protein">
    <location>
        <begin position="28"/>
        <end position="118"/>
    </location>
</feature>
<feature type="domain" description="Thioredoxin" evidence="1">
    <location>
        <begin position="28"/>
        <end position="114"/>
    </location>
</feature>
<feature type="disulfide bond" description="Redox-active" evidence="3">
    <location>
        <begin position="42"/>
        <end position="45"/>
    </location>
</feature>
<keyword id="KW-0903">Direct protein sequencing</keyword>
<keyword id="KW-1015">Disulfide bond</keyword>
<keyword id="KW-0560">Oxidoreductase</keyword>
<keyword id="KW-0676">Redox-active center</keyword>
<keyword id="KW-0964">Secreted</keyword>
<keyword id="KW-0732">Signal</keyword>
<dbReference type="EMBL" id="D37936">
    <property type="protein sequence ID" value="BAA07155.1"/>
    <property type="molecule type" value="Genomic_DNA"/>
</dbReference>
<dbReference type="PIR" id="I39787">
    <property type="entry name" value="I39787"/>
</dbReference>
<dbReference type="SMR" id="Q44856"/>
<dbReference type="GO" id="GO:0005576">
    <property type="term" value="C:extracellular region"/>
    <property type="evidence" value="ECO:0007669"/>
    <property type="project" value="UniProtKB-SubCell"/>
</dbReference>
<dbReference type="GO" id="GO:0016491">
    <property type="term" value="F:oxidoreductase activity"/>
    <property type="evidence" value="ECO:0007669"/>
    <property type="project" value="UniProtKB-KW"/>
</dbReference>
<dbReference type="CDD" id="cd02947">
    <property type="entry name" value="TRX_family"/>
    <property type="match status" value="1"/>
</dbReference>
<dbReference type="Gene3D" id="3.40.30.10">
    <property type="entry name" value="Glutaredoxin"/>
    <property type="match status" value="1"/>
</dbReference>
<dbReference type="InterPro" id="IPR036249">
    <property type="entry name" value="Thioredoxin-like_sf"/>
</dbReference>
<dbReference type="InterPro" id="IPR013766">
    <property type="entry name" value="Thioredoxin_domain"/>
</dbReference>
<dbReference type="Pfam" id="PF00085">
    <property type="entry name" value="Thioredoxin"/>
    <property type="match status" value="1"/>
</dbReference>
<dbReference type="SUPFAM" id="SSF52833">
    <property type="entry name" value="Thioredoxin-like"/>
    <property type="match status" value="1"/>
</dbReference>
<dbReference type="PROSITE" id="PS51352">
    <property type="entry name" value="THIOREDOXIN_2"/>
    <property type="match status" value="1"/>
</dbReference>
<name>BDB_BRECH</name>
<comment type="function">
    <text>Stimulates the oxidation and reduction of disulfide bonds in vitro.</text>
</comment>
<comment type="subcellular location">
    <subcellularLocation>
        <location>Secreted</location>
    </subcellularLocation>
    <text>Is found associated with the cell lysate, thought to be associated with the cell periphery.</text>
</comment>
<comment type="similarity">
    <text evidence="3">Belongs to the thioredoxin family.</text>
</comment>
<protein>
    <recommendedName>
        <fullName>Disulfide bond formation protein</fullName>
    </recommendedName>
    <alternativeName>
        <fullName>Disulfide oxidoreductase</fullName>
    </alternativeName>
    <alternativeName>
        <fullName>Thiol-disulfide oxidoreductase</fullName>
    </alternativeName>
</protein>
<proteinExistence type="evidence at protein level"/>
<evidence type="ECO:0000255" key="1">
    <source>
        <dbReference type="PROSITE-ProRule" id="PRU00691"/>
    </source>
</evidence>
<evidence type="ECO:0000269" key="2">
    <source>
    </source>
</evidence>
<evidence type="ECO:0000305" key="3"/>
<organism>
    <name type="scientific">Brevibacillus choshinensis</name>
    <dbReference type="NCBI Taxonomy" id="54911"/>
    <lineage>
        <taxon>Bacteria</taxon>
        <taxon>Bacillati</taxon>
        <taxon>Bacillota</taxon>
        <taxon>Bacilli</taxon>
        <taxon>Bacillales</taxon>
        <taxon>Paenibacillaceae</taxon>
        <taxon>Brevibacillus</taxon>
    </lineage>
</organism>
<gene>
    <name type="primary">bdb</name>
</gene>
<sequence length="118" mass="13326">MRAKWLWMTAVGSLLITVLTAWGWAAASSQDSKIVYVFSDSCGYCQTFRPTLETVLQEYPQTSVERLDIREERDLKEALRLGAEATPTIFVVRDGTVMDKLEGDVAEAVLRSFFQKKS</sequence>